<reference key="1">
    <citation type="submission" date="2008-02" db="EMBL/GenBank/DDBJ databases">
        <title>Complete sequence of Pseudomonas putida W619.</title>
        <authorList>
            <person name="Copeland A."/>
            <person name="Lucas S."/>
            <person name="Lapidus A."/>
            <person name="Barry K."/>
            <person name="Detter J.C."/>
            <person name="Glavina del Rio T."/>
            <person name="Dalin E."/>
            <person name="Tice H."/>
            <person name="Pitluck S."/>
            <person name="Chain P."/>
            <person name="Malfatti S."/>
            <person name="Shin M."/>
            <person name="Vergez L."/>
            <person name="Schmutz J."/>
            <person name="Larimer F."/>
            <person name="Land M."/>
            <person name="Hauser L."/>
            <person name="Kyrpides N."/>
            <person name="Kim E."/>
            <person name="Taghavi S."/>
            <person name="Vangronsveld D."/>
            <person name="van der Lelie D."/>
            <person name="Richardson P."/>
        </authorList>
    </citation>
    <scope>NUCLEOTIDE SEQUENCE [LARGE SCALE GENOMIC DNA]</scope>
    <source>
        <strain>W619</strain>
    </source>
</reference>
<sequence>MKLRPLHDRVVIRRSEEESKTAGGIVLPGSAAEKPNRGEVVAVGTGRILDNGEVRALAVKVGDKVVFGPYSGSNTVKVDGEDLLVMSENEILAVVEG</sequence>
<dbReference type="EMBL" id="CP000949">
    <property type="protein sequence ID" value="ACA71472.1"/>
    <property type="molecule type" value="Genomic_DNA"/>
</dbReference>
<dbReference type="SMR" id="B1J3K4"/>
<dbReference type="STRING" id="390235.PputW619_0967"/>
<dbReference type="KEGG" id="ppw:PputW619_0967"/>
<dbReference type="eggNOG" id="COG0234">
    <property type="taxonomic scope" value="Bacteria"/>
</dbReference>
<dbReference type="HOGENOM" id="CLU_132825_2_0_6"/>
<dbReference type="OrthoDB" id="9806791at2"/>
<dbReference type="GO" id="GO:0005737">
    <property type="term" value="C:cytoplasm"/>
    <property type="evidence" value="ECO:0007669"/>
    <property type="project" value="UniProtKB-SubCell"/>
</dbReference>
<dbReference type="GO" id="GO:0005524">
    <property type="term" value="F:ATP binding"/>
    <property type="evidence" value="ECO:0007669"/>
    <property type="project" value="InterPro"/>
</dbReference>
<dbReference type="GO" id="GO:0046872">
    <property type="term" value="F:metal ion binding"/>
    <property type="evidence" value="ECO:0007669"/>
    <property type="project" value="TreeGrafter"/>
</dbReference>
<dbReference type="GO" id="GO:0044183">
    <property type="term" value="F:protein folding chaperone"/>
    <property type="evidence" value="ECO:0007669"/>
    <property type="project" value="InterPro"/>
</dbReference>
<dbReference type="GO" id="GO:0051087">
    <property type="term" value="F:protein-folding chaperone binding"/>
    <property type="evidence" value="ECO:0007669"/>
    <property type="project" value="TreeGrafter"/>
</dbReference>
<dbReference type="GO" id="GO:0051082">
    <property type="term" value="F:unfolded protein binding"/>
    <property type="evidence" value="ECO:0007669"/>
    <property type="project" value="TreeGrafter"/>
</dbReference>
<dbReference type="GO" id="GO:0051085">
    <property type="term" value="P:chaperone cofactor-dependent protein refolding"/>
    <property type="evidence" value="ECO:0007669"/>
    <property type="project" value="TreeGrafter"/>
</dbReference>
<dbReference type="CDD" id="cd00320">
    <property type="entry name" value="cpn10"/>
    <property type="match status" value="1"/>
</dbReference>
<dbReference type="FunFam" id="2.30.33.40:FF:000001">
    <property type="entry name" value="10 kDa chaperonin"/>
    <property type="match status" value="1"/>
</dbReference>
<dbReference type="Gene3D" id="2.30.33.40">
    <property type="entry name" value="GroES chaperonin"/>
    <property type="match status" value="1"/>
</dbReference>
<dbReference type="HAMAP" id="MF_00580">
    <property type="entry name" value="CH10"/>
    <property type="match status" value="1"/>
</dbReference>
<dbReference type="InterPro" id="IPR020818">
    <property type="entry name" value="Chaperonin_GroES"/>
</dbReference>
<dbReference type="InterPro" id="IPR037124">
    <property type="entry name" value="Chaperonin_GroES_sf"/>
</dbReference>
<dbReference type="InterPro" id="IPR018369">
    <property type="entry name" value="Chaprnonin_Cpn10_CS"/>
</dbReference>
<dbReference type="InterPro" id="IPR011032">
    <property type="entry name" value="GroES-like_sf"/>
</dbReference>
<dbReference type="NCBIfam" id="NF001526">
    <property type="entry name" value="PRK00364.1-1"/>
    <property type="match status" value="1"/>
</dbReference>
<dbReference type="NCBIfam" id="NF001527">
    <property type="entry name" value="PRK00364.1-2"/>
    <property type="match status" value="1"/>
</dbReference>
<dbReference type="NCBIfam" id="NF001531">
    <property type="entry name" value="PRK00364.2-2"/>
    <property type="match status" value="1"/>
</dbReference>
<dbReference type="NCBIfam" id="NF001533">
    <property type="entry name" value="PRK00364.2-4"/>
    <property type="match status" value="1"/>
</dbReference>
<dbReference type="PANTHER" id="PTHR10772">
    <property type="entry name" value="10 KDA HEAT SHOCK PROTEIN"/>
    <property type="match status" value="1"/>
</dbReference>
<dbReference type="PANTHER" id="PTHR10772:SF58">
    <property type="entry name" value="CO-CHAPERONIN GROES"/>
    <property type="match status" value="1"/>
</dbReference>
<dbReference type="Pfam" id="PF00166">
    <property type="entry name" value="Cpn10"/>
    <property type="match status" value="1"/>
</dbReference>
<dbReference type="PRINTS" id="PR00297">
    <property type="entry name" value="CHAPERONIN10"/>
</dbReference>
<dbReference type="SMART" id="SM00883">
    <property type="entry name" value="Cpn10"/>
    <property type="match status" value="1"/>
</dbReference>
<dbReference type="SUPFAM" id="SSF50129">
    <property type="entry name" value="GroES-like"/>
    <property type="match status" value="1"/>
</dbReference>
<dbReference type="PROSITE" id="PS00681">
    <property type="entry name" value="CHAPERONINS_CPN10"/>
    <property type="match status" value="1"/>
</dbReference>
<comment type="function">
    <text evidence="1">Together with the chaperonin GroEL, plays an essential role in assisting protein folding. The GroEL-GroES system forms a nano-cage that allows encapsulation of the non-native substrate proteins and provides a physical environment optimized to promote and accelerate protein folding. GroES binds to the apical surface of the GroEL ring, thereby capping the opening of the GroEL channel.</text>
</comment>
<comment type="subunit">
    <text evidence="1">Heptamer of 7 subunits arranged in a ring. Interacts with the chaperonin GroEL.</text>
</comment>
<comment type="subcellular location">
    <subcellularLocation>
        <location evidence="1">Cytoplasm</location>
    </subcellularLocation>
</comment>
<comment type="similarity">
    <text evidence="1">Belongs to the GroES chaperonin family.</text>
</comment>
<organism>
    <name type="scientific">Pseudomonas putida (strain W619)</name>
    <dbReference type="NCBI Taxonomy" id="390235"/>
    <lineage>
        <taxon>Bacteria</taxon>
        <taxon>Pseudomonadati</taxon>
        <taxon>Pseudomonadota</taxon>
        <taxon>Gammaproteobacteria</taxon>
        <taxon>Pseudomonadales</taxon>
        <taxon>Pseudomonadaceae</taxon>
        <taxon>Pseudomonas</taxon>
    </lineage>
</organism>
<name>CH10_PSEPW</name>
<keyword id="KW-0143">Chaperone</keyword>
<keyword id="KW-0963">Cytoplasm</keyword>
<feature type="chain" id="PRO_1000129695" description="Co-chaperonin GroES">
    <location>
        <begin position="1"/>
        <end position="97"/>
    </location>
</feature>
<gene>
    <name evidence="1" type="primary">groES</name>
    <name evidence="1" type="synonym">groS</name>
    <name type="ordered locus">PputW619_0967</name>
</gene>
<proteinExistence type="inferred from homology"/>
<evidence type="ECO:0000255" key="1">
    <source>
        <dbReference type="HAMAP-Rule" id="MF_00580"/>
    </source>
</evidence>
<accession>B1J3K4</accession>
<protein>
    <recommendedName>
        <fullName evidence="1">Co-chaperonin GroES</fullName>
    </recommendedName>
    <alternativeName>
        <fullName evidence="1">10 kDa chaperonin</fullName>
    </alternativeName>
    <alternativeName>
        <fullName evidence="1">Chaperonin-10</fullName>
        <shortName evidence="1">Cpn10</shortName>
    </alternativeName>
</protein>